<evidence type="ECO:0000255" key="1">
    <source>
        <dbReference type="HAMAP-Rule" id="MF_00402"/>
    </source>
</evidence>
<evidence type="ECO:0000305" key="2"/>
<accession>Q2RJV3</accession>
<sequence>MNIIETLEKEQLRTDIPDFRPGDTVRVHVKVVEGNRERIQIFEGVVIGRRGRGINETFTVRRVSYGVAVERIFPLHSPRLERIEVVRHGKVRRAKLYYLRERVGKAARIKEER</sequence>
<keyword id="KW-0687">Ribonucleoprotein</keyword>
<keyword id="KW-0689">Ribosomal protein</keyword>
<proteinExistence type="inferred from homology"/>
<comment type="function">
    <text evidence="1">This protein is located at the 30S-50S ribosomal subunit interface and may play a role in the structure and function of the aminoacyl-tRNA binding site.</text>
</comment>
<comment type="similarity">
    <text evidence="1">Belongs to the bacterial ribosomal protein bL19 family.</text>
</comment>
<gene>
    <name evidence="1" type="primary">rplS</name>
    <name type="ordered locus">Moth_0971</name>
</gene>
<name>RL19_MOOTA</name>
<organism>
    <name type="scientific">Moorella thermoacetica (strain ATCC 39073 / JCM 9320)</name>
    <dbReference type="NCBI Taxonomy" id="264732"/>
    <lineage>
        <taxon>Bacteria</taxon>
        <taxon>Bacillati</taxon>
        <taxon>Bacillota</taxon>
        <taxon>Clostridia</taxon>
        <taxon>Moorellales</taxon>
        <taxon>Moorellaceae</taxon>
        <taxon>Moorella</taxon>
    </lineage>
</organism>
<feature type="chain" id="PRO_0000252520" description="Large ribosomal subunit protein bL19">
    <location>
        <begin position="1"/>
        <end position="113"/>
    </location>
</feature>
<reference key="1">
    <citation type="journal article" date="2008" name="Environ. Microbiol.">
        <title>The complete genome sequence of Moorella thermoacetica (f. Clostridium thermoaceticum).</title>
        <authorList>
            <person name="Pierce E."/>
            <person name="Xie G."/>
            <person name="Barabote R.D."/>
            <person name="Saunders E."/>
            <person name="Han C.S."/>
            <person name="Detter J.C."/>
            <person name="Richardson P."/>
            <person name="Brettin T.S."/>
            <person name="Das A."/>
            <person name="Ljungdahl L.G."/>
            <person name="Ragsdale S.W."/>
        </authorList>
    </citation>
    <scope>NUCLEOTIDE SEQUENCE [LARGE SCALE GENOMIC DNA]</scope>
    <source>
        <strain>ATCC 39073 / JCM 9320</strain>
    </source>
</reference>
<protein>
    <recommendedName>
        <fullName evidence="1">Large ribosomal subunit protein bL19</fullName>
    </recommendedName>
    <alternativeName>
        <fullName evidence="2">50S ribosomal protein L19</fullName>
    </alternativeName>
</protein>
<dbReference type="EMBL" id="CP000232">
    <property type="protein sequence ID" value="ABC19286.1"/>
    <property type="molecule type" value="Genomic_DNA"/>
</dbReference>
<dbReference type="RefSeq" id="YP_429829.1">
    <property type="nucleotide sequence ID" value="NC_007644.1"/>
</dbReference>
<dbReference type="SMR" id="Q2RJV3"/>
<dbReference type="STRING" id="264732.Moth_0971"/>
<dbReference type="EnsemblBacteria" id="ABC19286">
    <property type="protein sequence ID" value="ABC19286"/>
    <property type="gene ID" value="Moth_0971"/>
</dbReference>
<dbReference type="KEGG" id="mta:Moth_0971"/>
<dbReference type="PATRIC" id="fig|264732.11.peg.1045"/>
<dbReference type="eggNOG" id="COG0335">
    <property type="taxonomic scope" value="Bacteria"/>
</dbReference>
<dbReference type="HOGENOM" id="CLU_103507_2_2_9"/>
<dbReference type="OrthoDB" id="9803541at2"/>
<dbReference type="GO" id="GO:0022625">
    <property type="term" value="C:cytosolic large ribosomal subunit"/>
    <property type="evidence" value="ECO:0007669"/>
    <property type="project" value="TreeGrafter"/>
</dbReference>
<dbReference type="GO" id="GO:0003735">
    <property type="term" value="F:structural constituent of ribosome"/>
    <property type="evidence" value="ECO:0007669"/>
    <property type="project" value="InterPro"/>
</dbReference>
<dbReference type="GO" id="GO:0006412">
    <property type="term" value="P:translation"/>
    <property type="evidence" value="ECO:0007669"/>
    <property type="project" value="UniProtKB-UniRule"/>
</dbReference>
<dbReference type="FunFam" id="2.30.30.790:FF:000001">
    <property type="entry name" value="50S ribosomal protein L19"/>
    <property type="match status" value="1"/>
</dbReference>
<dbReference type="Gene3D" id="2.30.30.790">
    <property type="match status" value="1"/>
</dbReference>
<dbReference type="HAMAP" id="MF_00402">
    <property type="entry name" value="Ribosomal_bL19"/>
    <property type="match status" value="1"/>
</dbReference>
<dbReference type="InterPro" id="IPR001857">
    <property type="entry name" value="Ribosomal_bL19"/>
</dbReference>
<dbReference type="InterPro" id="IPR018257">
    <property type="entry name" value="Ribosomal_bL19_CS"/>
</dbReference>
<dbReference type="InterPro" id="IPR038657">
    <property type="entry name" value="Ribosomal_bL19_sf"/>
</dbReference>
<dbReference type="InterPro" id="IPR008991">
    <property type="entry name" value="Translation_prot_SH3-like_sf"/>
</dbReference>
<dbReference type="NCBIfam" id="TIGR01024">
    <property type="entry name" value="rplS_bact"/>
    <property type="match status" value="1"/>
</dbReference>
<dbReference type="PANTHER" id="PTHR15680:SF9">
    <property type="entry name" value="LARGE RIBOSOMAL SUBUNIT PROTEIN BL19M"/>
    <property type="match status" value="1"/>
</dbReference>
<dbReference type="PANTHER" id="PTHR15680">
    <property type="entry name" value="RIBOSOMAL PROTEIN L19"/>
    <property type="match status" value="1"/>
</dbReference>
<dbReference type="Pfam" id="PF01245">
    <property type="entry name" value="Ribosomal_L19"/>
    <property type="match status" value="1"/>
</dbReference>
<dbReference type="PIRSF" id="PIRSF002191">
    <property type="entry name" value="Ribosomal_L19"/>
    <property type="match status" value="1"/>
</dbReference>
<dbReference type="PRINTS" id="PR00061">
    <property type="entry name" value="RIBOSOMALL19"/>
</dbReference>
<dbReference type="SUPFAM" id="SSF50104">
    <property type="entry name" value="Translation proteins SH3-like domain"/>
    <property type="match status" value="1"/>
</dbReference>
<dbReference type="PROSITE" id="PS01015">
    <property type="entry name" value="RIBOSOMAL_L19"/>
    <property type="match status" value="1"/>
</dbReference>